<gene>
    <name evidence="1" type="primary">atpG</name>
    <name type="ordered locus">BT_2465</name>
</gene>
<reference key="1">
    <citation type="journal article" date="2007" name="Nat. Genet.">
        <title>Genomic analysis of Bartonella identifies type IV secretion systems as host adaptability factors.</title>
        <authorList>
            <person name="Saenz H.L."/>
            <person name="Engel P."/>
            <person name="Stoeckli M.C."/>
            <person name="Lanz C."/>
            <person name="Raddatz G."/>
            <person name="Vayssier-Taussat M."/>
            <person name="Birtles R."/>
            <person name="Schuster S.C."/>
            <person name="Dehio C."/>
        </authorList>
    </citation>
    <scope>NUCLEOTIDE SEQUENCE [LARGE SCALE GENOMIC DNA]</scope>
    <source>
        <strain>CIP 105476 / IBS 506</strain>
    </source>
</reference>
<evidence type="ECO:0000255" key="1">
    <source>
        <dbReference type="HAMAP-Rule" id="MF_00815"/>
    </source>
</evidence>
<accession>A9IYW8</accession>
<sequence>MASLKDLRDRIASVKATQKITKAMQMVAAARLHRAQEAAQSARPYAKRMADILTSVAADVDGVDAPALMRGTGRDDVHLLVVCTAERGLCGAFNVQIARRAREQIKALLAAGKIVKIITVGKKGADILSRDYKSLMIDHIDLHAVKRIGFAEALVISQRIVDLFNEGAFDVCTLFYSEFVSVINQRPTAFGLIPMGAPKAAVEATDVVEQKETSKDSQSIVHEAIVYEYEPDAASLLEALVPRNLSVQIFRALLENVAGEMGAKMTAMDNASRNAGEMINKLTVAYNRQRQAQITTELIEIIAGAEAL</sequence>
<name>ATPG_BART1</name>
<organism>
    <name type="scientific">Bartonella tribocorum (strain CIP 105476 / IBS 506)</name>
    <dbReference type="NCBI Taxonomy" id="382640"/>
    <lineage>
        <taxon>Bacteria</taxon>
        <taxon>Pseudomonadati</taxon>
        <taxon>Pseudomonadota</taxon>
        <taxon>Alphaproteobacteria</taxon>
        <taxon>Hyphomicrobiales</taxon>
        <taxon>Bartonellaceae</taxon>
        <taxon>Bartonella</taxon>
    </lineage>
</organism>
<dbReference type="EMBL" id="AM260525">
    <property type="protein sequence ID" value="CAK02443.1"/>
    <property type="molecule type" value="Genomic_DNA"/>
</dbReference>
<dbReference type="RefSeq" id="WP_012232484.1">
    <property type="nucleotide sequence ID" value="NC_010161.1"/>
</dbReference>
<dbReference type="SMR" id="A9IYW8"/>
<dbReference type="KEGG" id="btr:BT_2465"/>
<dbReference type="eggNOG" id="COG0224">
    <property type="taxonomic scope" value="Bacteria"/>
</dbReference>
<dbReference type="HOGENOM" id="CLU_050669_0_1_5"/>
<dbReference type="Proteomes" id="UP000001592">
    <property type="component" value="Chromosome"/>
</dbReference>
<dbReference type="GO" id="GO:0005886">
    <property type="term" value="C:plasma membrane"/>
    <property type="evidence" value="ECO:0007669"/>
    <property type="project" value="UniProtKB-SubCell"/>
</dbReference>
<dbReference type="GO" id="GO:0045259">
    <property type="term" value="C:proton-transporting ATP synthase complex"/>
    <property type="evidence" value="ECO:0007669"/>
    <property type="project" value="UniProtKB-KW"/>
</dbReference>
<dbReference type="GO" id="GO:0005524">
    <property type="term" value="F:ATP binding"/>
    <property type="evidence" value="ECO:0007669"/>
    <property type="project" value="UniProtKB-UniRule"/>
</dbReference>
<dbReference type="GO" id="GO:0046933">
    <property type="term" value="F:proton-transporting ATP synthase activity, rotational mechanism"/>
    <property type="evidence" value="ECO:0007669"/>
    <property type="project" value="UniProtKB-UniRule"/>
</dbReference>
<dbReference type="GO" id="GO:0042777">
    <property type="term" value="P:proton motive force-driven plasma membrane ATP synthesis"/>
    <property type="evidence" value="ECO:0007669"/>
    <property type="project" value="UniProtKB-UniRule"/>
</dbReference>
<dbReference type="CDD" id="cd12151">
    <property type="entry name" value="F1-ATPase_gamma"/>
    <property type="match status" value="1"/>
</dbReference>
<dbReference type="FunFam" id="1.10.287.80:FF:000001">
    <property type="entry name" value="ATP synthase gamma chain"/>
    <property type="match status" value="1"/>
</dbReference>
<dbReference type="FunFam" id="1.10.287.80:FF:000003">
    <property type="entry name" value="ATP synthase gamma chain, chloroplastic"/>
    <property type="match status" value="1"/>
</dbReference>
<dbReference type="Gene3D" id="3.40.1380.10">
    <property type="match status" value="1"/>
</dbReference>
<dbReference type="Gene3D" id="1.10.287.80">
    <property type="entry name" value="ATP synthase, gamma subunit, helix hairpin domain"/>
    <property type="match status" value="1"/>
</dbReference>
<dbReference type="HAMAP" id="MF_00815">
    <property type="entry name" value="ATP_synth_gamma_bact"/>
    <property type="match status" value="1"/>
</dbReference>
<dbReference type="InterPro" id="IPR035968">
    <property type="entry name" value="ATP_synth_F1_ATPase_gsu"/>
</dbReference>
<dbReference type="InterPro" id="IPR000131">
    <property type="entry name" value="ATP_synth_F1_gsu"/>
</dbReference>
<dbReference type="InterPro" id="IPR023632">
    <property type="entry name" value="ATP_synth_F1_gsu_CS"/>
</dbReference>
<dbReference type="NCBIfam" id="TIGR01146">
    <property type="entry name" value="ATPsyn_F1gamma"/>
    <property type="match status" value="1"/>
</dbReference>
<dbReference type="NCBIfam" id="NF004146">
    <property type="entry name" value="PRK05621.1-4"/>
    <property type="match status" value="1"/>
</dbReference>
<dbReference type="PANTHER" id="PTHR11693">
    <property type="entry name" value="ATP SYNTHASE GAMMA CHAIN"/>
    <property type="match status" value="1"/>
</dbReference>
<dbReference type="PANTHER" id="PTHR11693:SF22">
    <property type="entry name" value="ATP SYNTHASE SUBUNIT GAMMA, MITOCHONDRIAL"/>
    <property type="match status" value="1"/>
</dbReference>
<dbReference type="Pfam" id="PF00231">
    <property type="entry name" value="ATP-synt"/>
    <property type="match status" value="1"/>
</dbReference>
<dbReference type="PIRSF" id="PIRSF039089">
    <property type="entry name" value="ATP_synthase_gamma"/>
    <property type="match status" value="1"/>
</dbReference>
<dbReference type="PRINTS" id="PR00126">
    <property type="entry name" value="ATPASEGAMMA"/>
</dbReference>
<dbReference type="SUPFAM" id="SSF52943">
    <property type="entry name" value="ATP synthase (F1-ATPase), gamma subunit"/>
    <property type="match status" value="1"/>
</dbReference>
<dbReference type="PROSITE" id="PS00153">
    <property type="entry name" value="ATPASE_GAMMA"/>
    <property type="match status" value="1"/>
</dbReference>
<proteinExistence type="inferred from homology"/>
<comment type="function">
    <text evidence="1">Produces ATP from ADP in the presence of a proton gradient across the membrane. The gamma chain is believed to be important in regulating ATPase activity and the flow of protons through the CF(0) complex.</text>
</comment>
<comment type="subunit">
    <text evidence="1">F-type ATPases have 2 components, CF(1) - the catalytic core - and CF(0) - the membrane proton channel. CF(1) has five subunits: alpha(3), beta(3), gamma(1), delta(1), epsilon(1). CF(0) has three main subunits: a, b and c.</text>
</comment>
<comment type="subcellular location">
    <subcellularLocation>
        <location evidence="1">Cell inner membrane</location>
        <topology evidence="1">Peripheral membrane protein</topology>
    </subcellularLocation>
</comment>
<comment type="similarity">
    <text evidence="1">Belongs to the ATPase gamma chain family.</text>
</comment>
<feature type="chain" id="PRO_1000083773" description="ATP synthase gamma chain">
    <location>
        <begin position="1"/>
        <end position="308"/>
    </location>
</feature>
<protein>
    <recommendedName>
        <fullName evidence="1">ATP synthase gamma chain</fullName>
    </recommendedName>
    <alternativeName>
        <fullName evidence="1">ATP synthase F1 sector gamma subunit</fullName>
    </alternativeName>
    <alternativeName>
        <fullName evidence="1">F-ATPase gamma subunit</fullName>
    </alternativeName>
</protein>
<keyword id="KW-0066">ATP synthesis</keyword>
<keyword id="KW-0997">Cell inner membrane</keyword>
<keyword id="KW-1003">Cell membrane</keyword>
<keyword id="KW-0139">CF(1)</keyword>
<keyword id="KW-0375">Hydrogen ion transport</keyword>
<keyword id="KW-0406">Ion transport</keyword>
<keyword id="KW-0472">Membrane</keyword>
<keyword id="KW-0813">Transport</keyword>